<proteinExistence type="evidence at protein level"/>
<feature type="chain" id="PRO_0000232644" description="Serine/threonine-protein kinase 33">
    <location>
        <begin position="1"/>
        <end position="514"/>
    </location>
</feature>
<feature type="domain" description="Protein kinase" evidence="2">
    <location>
        <begin position="116"/>
        <end position="381"/>
    </location>
</feature>
<feature type="region of interest" description="Disordered" evidence="4">
    <location>
        <begin position="65"/>
        <end position="91"/>
    </location>
</feature>
<feature type="region of interest" description="Disordered" evidence="4">
    <location>
        <begin position="402"/>
        <end position="468"/>
    </location>
</feature>
<feature type="region of interest" description="Disordered" evidence="4">
    <location>
        <begin position="485"/>
        <end position="514"/>
    </location>
</feature>
<feature type="compositionally biased region" description="Basic and acidic residues" evidence="4">
    <location>
        <begin position="65"/>
        <end position="86"/>
    </location>
</feature>
<feature type="compositionally biased region" description="Basic and acidic residues" evidence="4">
    <location>
        <begin position="413"/>
        <end position="426"/>
    </location>
</feature>
<feature type="compositionally biased region" description="Polar residues" evidence="4">
    <location>
        <begin position="449"/>
        <end position="468"/>
    </location>
</feature>
<feature type="active site" description="Proton acceptor" evidence="2 3">
    <location>
        <position position="238"/>
    </location>
</feature>
<feature type="binding site" evidence="2">
    <location>
        <begin position="122"/>
        <end position="130"/>
    </location>
    <ligand>
        <name>ATP</name>
        <dbReference type="ChEBI" id="CHEBI:30616"/>
    </ligand>
</feature>
<feature type="binding site" evidence="2">
    <location>
        <position position="145"/>
    </location>
    <ligand>
        <name>ATP</name>
        <dbReference type="ChEBI" id="CHEBI:30616"/>
    </ligand>
</feature>
<feature type="modified residue" description="Phosphoserine" evidence="1">
    <location>
        <position position="407"/>
    </location>
</feature>
<feature type="splice variant" id="VSP_017939" description="In isoform 2." evidence="13">
    <location>
        <begin position="383"/>
        <end position="448"/>
    </location>
</feature>
<feature type="sequence variant" id="VAR_061746" description="In dbSNP:rs60786172.">
    <original>K</original>
    <variation>E</variation>
    <location>
        <position position="60"/>
    </location>
</feature>
<feature type="sequence variant" id="VAR_041172" description="In dbSNP:rs34525052." evidence="7">
    <original>E</original>
    <variation>D</variation>
    <location>
        <position position="98"/>
    </location>
</feature>
<feature type="sequence variant" id="VAR_041173" description="In a lung large cell carcinoma sample; somatic mutation." evidence="7">
    <original>L</original>
    <variation>V</variation>
    <location>
        <position position="160"/>
    </location>
</feature>
<feature type="sequence variant" id="VAR_041174" description="In dbSNP:rs3751096." evidence="7">
    <original>D</original>
    <variation>E</variation>
    <location>
        <position position="436"/>
    </location>
</feature>
<feature type="sequence variant" id="VAR_041175" description="In dbSNP:rs3751095." evidence="7">
    <original>A</original>
    <variation>T</variation>
    <location>
        <position position="437"/>
    </location>
</feature>
<feature type="sequence variant" id="VAR_089705" description="In SPGF93; uncertain significance." evidence="11">
    <location>
        <begin position="446"/>
        <end position="514"/>
    </location>
</feature>
<feature type="sequence variant" id="VAR_041176" description="In dbSNP:rs35296353." evidence="7">
    <original>A</original>
    <variation>E</variation>
    <location>
        <position position="458"/>
    </location>
</feature>
<feature type="sequence conflict" description="In Ref. 3; AAH31231." evidence="15" ref="3">
    <original>DA</original>
    <variation>ET</variation>
    <location>
        <begin position="436"/>
        <end position="437"/>
    </location>
</feature>
<feature type="sequence conflict" description="In Ref. 3; AAH31231." evidence="15" ref="3">
    <original>A</original>
    <variation>T</variation>
    <location>
        <position position="451"/>
    </location>
</feature>
<name>STK33_HUMAN</name>
<reference key="1">
    <citation type="journal article" date="2001" name="Gene">
        <title>A novel serine/threonine kinase gene, STK33, on human chromosome 11p15.3.</title>
        <authorList>
            <person name="Mujica A.O."/>
            <person name="Hankeln T."/>
            <person name="Schmidt E.R."/>
        </authorList>
    </citation>
    <scope>NUCLEOTIDE SEQUENCE [MRNA] (ISOFORM 1)</scope>
    <scope>TISSUE SPECIFICITY</scope>
    <source>
        <tissue>Uterus</tissue>
    </source>
</reference>
<reference key="2">
    <citation type="journal article" date="2004" name="Nat. Genet.">
        <title>Complete sequencing and characterization of 21,243 full-length human cDNAs.</title>
        <authorList>
            <person name="Ota T."/>
            <person name="Suzuki Y."/>
            <person name="Nishikawa T."/>
            <person name="Otsuki T."/>
            <person name="Sugiyama T."/>
            <person name="Irie R."/>
            <person name="Wakamatsu A."/>
            <person name="Hayashi K."/>
            <person name="Sato H."/>
            <person name="Nagai K."/>
            <person name="Kimura K."/>
            <person name="Makita H."/>
            <person name="Sekine M."/>
            <person name="Obayashi M."/>
            <person name="Nishi T."/>
            <person name="Shibahara T."/>
            <person name="Tanaka T."/>
            <person name="Ishii S."/>
            <person name="Yamamoto J."/>
            <person name="Saito K."/>
            <person name="Kawai Y."/>
            <person name="Isono Y."/>
            <person name="Nakamura Y."/>
            <person name="Nagahari K."/>
            <person name="Murakami K."/>
            <person name="Yasuda T."/>
            <person name="Iwayanagi T."/>
            <person name="Wagatsuma M."/>
            <person name="Shiratori A."/>
            <person name="Sudo H."/>
            <person name="Hosoiri T."/>
            <person name="Kaku Y."/>
            <person name="Kodaira H."/>
            <person name="Kondo H."/>
            <person name="Sugawara M."/>
            <person name="Takahashi M."/>
            <person name="Kanda K."/>
            <person name="Yokoi T."/>
            <person name="Furuya T."/>
            <person name="Kikkawa E."/>
            <person name="Omura Y."/>
            <person name="Abe K."/>
            <person name="Kamihara K."/>
            <person name="Katsuta N."/>
            <person name="Sato K."/>
            <person name="Tanikawa M."/>
            <person name="Yamazaki M."/>
            <person name="Ninomiya K."/>
            <person name="Ishibashi T."/>
            <person name="Yamashita H."/>
            <person name="Murakawa K."/>
            <person name="Fujimori K."/>
            <person name="Tanai H."/>
            <person name="Kimata M."/>
            <person name="Watanabe M."/>
            <person name="Hiraoka S."/>
            <person name="Chiba Y."/>
            <person name="Ishida S."/>
            <person name="Ono Y."/>
            <person name="Takiguchi S."/>
            <person name="Watanabe S."/>
            <person name="Yosida M."/>
            <person name="Hotuta T."/>
            <person name="Kusano J."/>
            <person name="Kanehori K."/>
            <person name="Takahashi-Fujii A."/>
            <person name="Hara H."/>
            <person name="Tanase T.-O."/>
            <person name="Nomura Y."/>
            <person name="Togiya S."/>
            <person name="Komai F."/>
            <person name="Hara R."/>
            <person name="Takeuchi K."/>
            <person name="Arita M."/>
            <person name="Imose N."/>
            <person name="Musashino K."/>
            <person name="Yuuki H."/>
            <person name="Oshima A."/>
            <person name="Sasaki N."/>
            <person name="Aotsuka S."/>
            <person name="Yoshikawa Y."/>
            <person name="Matsunawa H."/>
            <person name="Ichihara T."/>
            <person name="Shiohata N."/>
            <person name="Sano S."/>
            <person name="Moriya S."/>
            <person name="Momiyama H."/>
            <person name="Satoh N."/>
            <person name="Takami S."/>
            <person name="Terashima Y."/>
            <person name="Suzuki O."/>
            <person name="Nakagawa S."/>
            <person name="Senoh A."/>
            <person name="Mizoguchi H."/>
            <person name="Goto Y."/>
            <person name="Shimizu F."/>
            <person name="Wakebe H."/>
            <person name="Hishigaki H."/>
            <person name="Watanabe T."/>
            <person name="Sugiyama A."/>
            <person name="Takemoto M."/>
            <person name="Kawakami B."/>
            <person name="Yamazaki M."/>
            <person name="Watanabe K."/>
            <person name="Kumagai A."/>
            <person name="Itakura S."/>
            <person name="Fukuzumi Y."/>
            <person name="Fujimori Y."/>
            <person name="Komiyama M."/>
            <person name="Tashiro H."/>
            <person name="Tanigami A."/>
            <person name="Fujiwara T."/>
            <person name="Ono T."/>
            <person name="Yamada K."/>
            <person name="Fujii Y."/>
            <person name="Ozaki K."/>
            <person name="Hirao M."/>
            <person name="Ohmori Y."/>
            <person name="Kawabata A."/>
            <person name="Hikiji T."/>
            <person name="Kobatake N."/>
            <person name="Inagaki H."/>
            <person name="Ikema Y."/>
            <person name="Okamoto S."/>
            <person name="Okitani R."/>
            <person name="Kawakami T."/>
            <person name="Noguchi S."/>
            <person name="Itoh T."/>
            <person name="Shigeta K."/>
            <person name="Senba T."/>
            <person name="Matsumura K."/>
            <person name="Nakajima Y."/>
            <person name="Mizuno T."/>
            <person name="Morinaga M."/>
            <person name="Sasaki M."/>
            <person name="Togashi T."/>
            <person name="Oyama M."/>
            <person name="Hata H."/>
            <person name="Watanabe M."/>
            <person name="Komatsu T."/>
            <person name="Mizushima-Sugano J."/>
            <person name="Satoh T."/>
            <person name="Shirai Y."/>
            <person name="Takahashi Y."/>
            <person name="Nakagawa K."/>
            <person name="Okumura K."/>
            <person name="Nagase T."/>
            <person name="Nomura N."/>
            <person name="Kikuchi H."/>
            <person name="Masuho Y."/>
            <person name="Yamashita R."/>
            <person name="Nakai K."/>
            <person name="Yada T."/>
            <person name="Nakamura Y."/>
            <person name="Ohara O."/>
            <person name="Isogai T."/>
            <person name="Sugano S."/>
        </authorList>
    </citation>
    <scope>NUCLEOTIDE SEQUENCE [LARGE SCALE MRNA] (ISOFORM 1)</scope>
    <source>
        <tissue>Testis</tissue>
    </source>
</reference>
<reference key="3">
    <citation type="journal article" date="2004" name="Genome Res.">
        <title>The status, quality, and expansion of the NIH full-length cDNA project: the Mammalian Gene Collection (MGC).</title>
        <authorList>
            <consortium name="The MGC Project Team"/>
        </authorList>
    </citation>
    <scope>NUCLEOTIDE SEQUENCE [LARGE SCALE MRNA] (ISOFORM 1)</scope>
    <source>
        <tissue>Testis</tissue>
    </source>
</reference>
<reference key="4">
    <citation type="journal article" date="2007" name="BMC Genomics">
        <title>The full-ORF clone resource of the German cDNA consortium.</title>
        <authorList>
            <person name="Bechtel S."/>
            <person name="Rosenfelder H."/>
            <person name="Duda A."/>
            <person name="Schmidt C.P."/>
            <person name="Ernst U."/>
            <person name="Wellenreuther R."/>
            <person name="Mehrle A."/>
            <person name="Schuster C."/>
            <person name="Bahr A."/>
            <person name="Bloecker H."/>
            <person name="Heubner D."/>
            <person name="Hoerlein A."/>
            <person name="Michel G."/>
            <person name="Wedler H."/>
            <person name="Koehrer K."/>
            <person name="Ottenwaelder B."/>
            <person name="Poustka A."/>
            <person name="Wiemann S."/>
            <person name="Schupp I."/>
        </authorList>
    </citation>
    <scope>NUCLEOTIDE SEQUENCE [LARGE SCALE MRNA] OF 246-514 (ISOFORM 2)</scope>
    <source>
        <tissue>Stomach</tissue>
    </source>
</reference>
<reference key="5">
    <citation type="journal article" date="2005" name="FEBS J.">
        <title>Differential expression pattern of the novel serine/threonine kinase, STK33, in mice and men.</title>
        <authorList>
            <person name="Mujica A.O."/>
            <person name="Brauksiepe B."/>
            <person name="Saaler-Reinhardt S."/>
            <person name="Reuss S."/>
            <person name="Schmidt E.R."/>
        </authorList>
    </citation>
    <scope>TISSUE SPECIFICITY</scope>
</reference>
<reference key="6">
    <citation type="journal article" date="2008" name="Mol. Cell">
        <title>Kinase-selective enrichment enables quantitative phosphoproteomics of the kinome across the cell cycle.</title>
        <authorList>
            <person name="Daub H."/>
            <person name="Olsen J.V."/>
            <person name="Bairlein M."/>
            <person name="Gnad F."/>
            <person name="Oppermann F.S."/>
            <person name="Korner R."/>
            <person name="Greff Z."/>
            <person name="Keri G."/>
            <person name="Stemmann O."/>
            <person name="Mann M."/>
        </authorList>
    </citation>
    <scope>IDENTIFICATION BY MASS SPECTROMETRY [LARGE SCALE ANALYSIS]</scope>
    <source>
        <tissue>Cervix carcinoma</tissue>
    </source>
</reference>
<reference key="7">
    <citation type="journal article" date="2009" name="Anal. Chem.">
        <title>Lys-N and trypsin cover complementary parts of the phosphoproteome in a refined SCX-based approach.</title>
        <authorList>
            <person name="Gauci S."/>
            <person name="Helbig A.O."/>
            <person name="Slijper M."/>
            <person name="Krijgsveld J."/>
            <person name="Heck A.J."/>
            <person name="Mohammed S."/>
        </authorList>
    </citation>
    <scope>IDENTIFICATION BY MASS SPECTROMETRY [LARGE SCALE ANALYSIS]</scope>
</reference>
<reference key="8">
    <citation type="journal article" date="2009" name="Cell">
        <title>Synthetic lethal interaction between oncogenic KRAS dependency and STK33 suppression in human cancer cells.</title>
        <authorList>
            <person name="Scholl C."/>
            <person name="Froehling S."/>
            <person name="Dunn I.F."/>
            <person name="Schinzel A.C."/>
            <person name="Barbie D.A."/>
            <person name="Kim S.Y."/>
            <person name="Silver S.J."/>
            <person name="Tamayo P."/>
            <person name="Wadlow R.C."/>
            <person name="Ramaswamy S."/>
            <person name="Doehner K."/>
            <person name="Bullinger L."/>
            <person name="Sandy P."/>
            <person name="Boehm J.S."/>
            <person name="Root D.E."/>
            <person name="Jacks T."/>
            <person name="Hahn W.C."/>
            <person name="Gilliland D.G."/>
        </authorList>
    </citation>
    <scope>CAUTION</scope>
</reference>
<reference key="9">
    <citation type="journal article" date="2011" name="Cancer Res.">
        <title>STk33 kinase activity is non-essential in KRAS-dependent cancer cells.</title>
        <authorList>
            <person name="Babij C."/>
            <person name="Zhang Y."/>
            <person name="Kurzeja R.J."/>
            <person name="Munzli A."/>
            <person name="Shehabeldin A."/>
            <person name="Fernando M."/>
            <person name="Quon K."/>
            <person name="Kassner P.D."/>
            <person name="Ruefli-Brasse A.A."/>
            <person name="Watson V.J."/>
            <person name="Fajardo F."/>
            <person name="Jackson A."/>
            <person name="Zondlo J."/>
            <person name="Sun Y."/>
            <person name="Ellison A.R."/>
            <person name="Plewa C.A."/>
            <person name="San Miguel T."/>
            <person name="Robinson J."/>
            <person name="McCarter J."/>
            <person name="Schwandner R."/>
            <person name="Judd T."/>
            <person name="Carnahan J."/>
            <person name="Dussault I."/>
        </authorList>
    </citation>
    <scope>CAUTION</scope>
</reference>
<reference key="10">
    <citation type="journal article" date="2007" name="Nature">
        <title>Patterns of somatic mutation in human cancer genomes.</title>
        <authorList>
            <person name="Greenman C."/>
            <person name="Stephens P."/>
            <person name="Smith R."/>
            <person name="Dalgliesh G.L."/>
            <person name="Hunter C."/>
            <person name="Bignell G."/>
            <person name="Davies H."/>
            <person name="Teague J."/>
            <person name="Butler A."/>
            <person name="Stevens C."/>
            <person name="Edkins S."/>
            <person name="O'Meara S."/>
            <person name="Vastrik I."/>
            <person name="Schmidt E.E."/>
            <person name="Avis T."/>
            <person name="Barthorpe S."/>
            <person name="Bhamra G."/>
            <person name="Buck G."/>
            <person name="Choudhury B."/>
            <person name="Clements J."/>
            <person name="Cole J."/>
            <person name="Dicks E."/>
            <person name="Forbes S."/>
            <person name="Gray K."/>
            <person name="Halliday K."/>
            <person name="Harrison R."/>
            <person name="Hills K."/>
            <person name="Hinton J."/>
            <person name="Jenkinson A."/>
            <person name="Jones D."/>
            <person name="Menzies A."/>
            <person name="Mironenko T."/>
            <person name="Perry J."/>
            <person name="Raine K."/>
            <person name="Richardson D."/>
            <person name="Shepherd R."/>
            <person name="Small A."/>
            <person name="Tofts C."/>
            <person name="Varian J."/>
            <person name="Webb T."/>
            <person name="West S."/>
            <person name="Widaa S."/>
            <person name="Yates A."/>
            <person name="Cahill D.P."/>
            <person name="Louis D.N."/>
            <person name="Goldstraw P."/>
            <person name="Nicholson A.G."/>
            <person name="Brasseur F."/>
            <person name="Looijenga L."/>
            <person name="Weber B.L."/>
            <person name="Chiew Y.-E."/>
            <person name="DeFazio A."/>
            <person name="Greaves M.F."/>
            <person name="Green A.R."/>
            <person name="Campbell P."/>
            <person name="Birney E."/>
            <person name="Easton D.F."/>
            <person name="Chenevix-Trench G."/>
            <person name="Tan M.-H."/>
            <person name="Khoo S.K."/>
            <person name="Teh B.T."/>
            <person name="Yuen S.T."/>
            <person name="Leung S.Y."/>
            <person name="Wooster R."/>
            <person name="Futreal P.A."/>
            <person name="Stratton M.R."/>
        </authorList>
    </citation>
    <scope>VARIANTS [LARGE SCALE ANALYSIS] ASP-98; VAL-160; GLU-436; THR-437 AND GLU-458</scope>
</reference>
<reference key="11">
    <citation type="journal article" date="2021" name="Hum. Mol. Genet.">
        <title>Novel frameshift mutation in STK33 is associated with asthenozoospermia and multiple morphological abnormalities of the flagella.</title>
        <authorList>
            <person name="Ma H."/>
            <person name="Zhang B."/>
            <person name="Khan A."/>
            <person name="Zhao D."/>
            <person name="Ma A."/>
            <person name="Zhou J."/>
            <person name="Khan I."/>
            <person name="Khan K."/>
            <person name="Zhang H."/>
            <person name="Zhang Y."/>
            <person name="Jiang X."/>
            <person name="Dil S."/>
            <person name="Zeb A."/>
            <person name="Rahim F."/>
            <person name="Shi Q."/>
        </authorList>
    </citation>
    <scope>INVOLVEMENT IN SPGF93</scope>
</reference>
<reference key="12">
    <citation type="journal article" date="2023" name="Mol. Cell. Proteomics">
        <title>STK33 phosphorylates fibrous sheath protein AKAP3/4 to regulate sperm flagella assembly in spermiogenesis.</title>
        <authorList>
            <person name="Yu W."/>
            <person name="Li Y."/>
            <person name="Chen H."/>
            <person name="Cui Y."/>
            <person name="Situ C."/>
            <person name="Yao L."/>
            <person name="Zhang X."/>
            <person name="Lu S."/>
            <person name="Liu L."/>
            <person name="Li L."/>
            <person name="Ren J."/>
            <person name="Guo Y."/>
            <person name="Huo Z."/>
            <person name="Chen Y."/>
            <person name="Li H."/>
            <person name="Jiang T."/>
            <person name="Gu Y."/>
            <person name="Wang C."/>
            <person name="Zhu T."/>
            <person name="Li Y."/>
            <person name="Hu Z."/>
            <person name="Guo X."/>
        </authorList>
    </citation>
    <scope>FUNCTION</scope>
    <scope>INVOLVEMENT IN SPGF93</scope>
    <scope>VARIANT SPGF93 446-GLU--LEU-514 DEL</scope>
</reference>
<reference key="13">
    <citation type="journal article" date="2024" name="Science">
        <title>Reversible male contraception by targeted inhibition of serine/threonine kinase 33.</title>
        <authorList>
            <person name="Ku A.F."/>
            <person name="Sharma K.L."/>
            <person name="Ta H.M."/>
            <person name="Sutton C.M."/>
            <person name="Bohren K.M."/>
            <person name="Wang Y."/>
            <person name="Chamakuri S."/>
            <person name="Chen R."/>
            <person name="Hakenjos J.M."/>
            <person name="Jimmidi R."/>
            <person name="Kent K."/>
            <person name="Li F."/>
            <person name="Li J.Y."/>
            <person name="Ma L."/>
            <person name="Madasu C."/>
            <person name="Palaniappan M."/>
            <person name="Palmer S.S."/>
            <person name="Qin X."/>
            <person name="Robers M.B."/>
            <person name="Sankaran B."/>
            <person name="Tan Z."/>
            <person name="Vasquez Y.M."/>
            <person name="Wang J."/>
            <person name="Wilkinson J."/>
            <person name="Yu Z."/>
            <person name="Ye Q."/>
            <person name="Young D.W."/>
            <person name="Teng M."/>
            <person name="Kim C."/>
            <person name="Matzuk M.M."/>
        </authorList>
    </citation>
    <scope>X-RAY CRYSTALLOGRAPHY (2.7 ANGSTROMS) OF 99-383 IN COMPLEX WITH INHIBITOR CDD-2211</scope>
    <scope>FUNCTION</scope>
    <scope>ACTIVITY REGULATION</scope>
    <scope>SUBUNIT</scope>
</reference>
<protein>
    <recommendedName>
        <fullName evidence="15">Serine/threonine-protein kinase 33</fullName>
        <ecNumber evidence="1">2.7.11.1</ecNumber>
    </recommendedName>
</protein>
<keyword id="KW-0002">3D-structure</keyword>
<keyword id="KW-0025">Alternative splicing</keyword>
<keyword id="KW-0067">ATP-binding</keyword>
<keyword id="KW-0963">Cytoplasm</keyword>
<keyword id="KW-0206">Cytoskeleton</keyword>
<keyword id="KW-0221">Differentiation</keyword>
<keyword id="KW-0418">Kinase</keyword>
<keyword id="KW-0547">Nucleotide-binding</keyword>
<keyword id="KW-0597">Phosphoprotein</keyword>
<keyword id="KW-1267">Proteomics identification</keyword>
<keyword id="KW-1185">Reference proteome</keyword>
<keyword id="KW-0723">Serine/threonine-protein kinase</keyword>
<keyword id="KW-0744">Spermatogenesis</keyword>
<keyword id="KW-0808">Transferase</keyword>
<sequence>MADSGLDKKSTKCPDCSSASQKDVLCVCSSKTRVPPVLVVEMSQTSSIGSAESLISLERKKEKNINRDITSRKDLPSRTSNVERKASQQQWGRGNFTEGKVPHIRIENGAAIEEIYTFGRILGKGSFGIVIEATDKETETKWAIKKVNKEKAGSSAVKLLEREVNILKSVKHEHIIHLEQVFETPKKMYLVMELCEDGELKEILDRKGHFSENETRWIIQSLASAIAYLHNNDIVHRDLKLENIMVKSSLIDDNNEINLNIKVTDFGLAVKKQSRSEAMLQATCGTPIYMAPEVISAHDYSQQCDIWSIGVVMYMLLRGEPPFLASSEEKLFELIRKGELHFENAVWNSISDCAKSVLKQLMKVDPAHRITAKELLDNQWLTGNKLSSVRPTNVLEMMKEWKNNPESVEENTTEEKNKPSTEEKLKSYQPWGNVPDANYTSDEEEEKQSTAYEKQFPATSKDNFDMCSSSFTSSKLLPAEIKGEMEKTPVTPSQGTATKYPAKSGALSRTKKKL</sequence>
<gene>
    <name evidence="14" type="primary">STK33</name>
</gene>
<evidence type="ECO:0000250" key="1">
    <source>
        <dbReference type="UniProtKB" id="Q924X7"/>
    </source>
</evidence>
<evidence type="ECO:0000255" key="2">
    <source>
        <dbReference type="PROSITE-ProRule" id="PRU00159"/>
    </source>
</evidence>
<evidence type="ECO:0000255" key="3">
    <source>
        <dbReference type="PROSITE-ProRule" id="PRU10027"/>
    </source>
</evidence>
<evidence type="ECO:0000256" key="4">
    <source>
        <dbReference type="SAM" id="MobiDB-lite"/>
    </source>
</evidence>
<evidence type="ECO:0000269" key="5">
    <source>
    </source>
</evidence>
<evidence type="ECO:0000269" key="6">
    <source>
    </source>
</evidence>
<evidence type="ECO:0000269" key="7">
    <source>
    </source>
</evidence>
<evidence type="ECO:0000269" key="8">
    <source>
    </source>
</evidence>
<evidence type="ECO:0000269" key="9">
    <source>
    </source>
</evidence>
<evidence type="ECO:0000269" key="10">
    <source>
    </source>
</evidence>
<evidence type="ECO:0000269" key="11">
    <source>
    </source>
</evidence>
<evidence type="ECO:0000269" key="12">
    <source>
    </source>
</evidence>
<evidence type="ECO:0000303" key="13">
    <source>
    </source>
</evidence>
<evidence type="ECO:0000303" key="14">
    <source>
    </source>
</evidence>
<evidence type="ECO:0000305" key="15"/>
<accession>Q9BYT3</accession>
<accession>Q658S6</accession>
<accession>Q8NEF5</accession>
<organism>
    <name type="scientific">Homo sapiens</name>
    <name type="common">Human</name>
    <dbReference type="NCBI Taxonomy" id="9606"/>
    <lineage>
        <taxon>Eukaryota</taxon>
        <taxon>Metazoa</taxon>
        <taxon>Chordata</taxon>
        <taxon>Craniata</taxon>
        <taxon>Vertebrata</taxon>
        <taxon>Euteleostomi</taxon>
        <taxon>Mammalia</taxon>
        <taxon>Eutheria</taxon>
        <taxon>Euarchontoglires</taxon>
        <taxon>Primates</taxon>
        <taxon>Haplorrhini</taxon>
        <taxon>Catarrhini</taxon>
        <taxon>Hominidae</taxon>
        <taxon>Homo</taxon>
    </lineage>
</organism>
<comment type="function">
    <text evidence="1 11 12">Serine/threonine protein kinase required for spermatid differentiation and male fertility (PubMed:37146716, PubMed:38781365). Promotes sperm flagella assembly during spermatogenesis by mediating phosphorylation of fibrous sheath proteins AKAP3 and AKAP4 (By similarity). Also phosphorylates vimentin/VIM, thereby regulating the dynamic behavior of the intermediate filament cytoskeleton (By similarity).</text>
</comment>
<comment type="catalytic activity">
    <reaction evidence="1">
        <text>L-seryl-[protein] + ATP = O-phospho-L-seryl-[protein] + ADP + H(+)</text>
        <dbReference type="Rhea" id="RHEA:17989"/>
        <dbReference type="Rhea" id="RHEA-COMP:9863"/>
        <dbReference type="Rhea" id="RHEA-COMP:11604"/>
        <dbReference type="ChEBI" id="CHEBI:15378"/>
        <dbReference type="ChEBI" id="CHEBI:29999"/>
        <dbReference type="ChEBI" id="CHEBI:30616"/>
        <dbReference type="ChEBI" id="CHEBI:83421"/>
        <dbReference type="ChEBI" id="CHEBI:456216"/>
        <dbReference type="EC" id="2.7.11.1"/>
    </reaction>
    <physiologicalReaction direction="left-to-right" evidence="1">
        <dbReference type="Rhea" id="RHEA:17990"/>
    </physiologicalReaction>
</comment>
<comment type="catalytic activity">
    <reaction evidence="1">
        <text>L-threonyl-[protein] + ATP = O-phospho-L-threonyl-[protein] + ADP + H(+)</text>
        <dbReference type="Rhea" id="RHEA:46608"/>
        <dbReference type="Rhea" id="RHEA-COMP:11060"/>
        <dbReference type="Rhea" id="RHEA-COMP:11605"/>
        <dbReference type="ChEBI" id="CHEBI:15378"/>
        <dbReference type="ChEBI" id="CHEBI:30013"/>
        <dbReference type="ChEBI" id="CHEBI:30616"/>
        <dbReference type="ChEBI" id="CHEBI:61977"/>
        <dbReference type="ChEBI" id="CHEBI:456216"/>
        <dbReference type="EC" id="2.7.11.1"/>
    </reaction>
    <physiologicalReaction direction="left-to-right" evidence="1">
        <dbReference type="Rhea" id="RHEA:46609"/>
    </physiologicalReaction>
</comment>
<comment type="activity regulation">
    <text evidence="12">Specifically inhibited by CDD-2807 ((3-([1,1'-Biphenyl]-2-ylethynyl)-1H-indazol-5-yl)(2,6-diazaspiro[3.5]nonan-2-yl)methanone).</text>
</comment>
<comment type="subunit">
    <text evidence="12">Homodimer.</text>
</comment>
<comment type="subcellular location">
    <subcellularLocation>
        <location evidence="1">Cytoplasm</location>
    </subcellularLocation>
    <subcellularLocation>
        <location evidence="1">Cytoplasm</location>
        <location evidence="1">Cytoskeleton</location>
    </subcellularLocation>
    <subcellularLocation>
        <location evidence="1">Cytoplasm</location>
        <location evidence="1">Perinuclear region</location>
    </subcellularLocation>
    <text evidence="1">Colocalizes with the caudal end of the manchette, a transient structure that guides tail elongation in elongating spermatids.</text>
</comment>
<comment type="alternative products">
    <event type="alternative splicing"/>
    <isoform>
        <id>Q9BYT3-1</id>
        <name>1</name>
        <sequence type="displayed"/>
    </isoform>
    <isoform>
        <id>Q9BYT3-2</id>
        <name>2</name>
        <sequence type="described" ref="VSP_017939"/>
    </isoform>
</comment>
<comment type="tissue specificity">
    <text evidence="5 6">Highly expressed in testis, fetal lung and heart, followed by pituitary gland, kidney, interventricular septum, pancreas, heart, trachea, thyroid gland and uterus. Weak hybridization signals were observed in the following tissues: amygdala, aorta, esophagus, colon ascending, colon transverse, skeletal muscle, spleen, peripheral blood leukocyte, lymph node, bone marrow, placenta, prostate, liver, salivary gland, mammary gland, some tumor cell lines, fetal brain, fetal liver, fetal spleen and fetal thymus. No signal at all was detectable in RNA from tissues of the nervous system.</text>
</comment>
<comment type="PTM">
    <text evidence="1">Autophosphorylated.</text>
</comment>
<comment type="disease" evidence="10 11">
    <disease id="DI-06910">
        <name>Spermatogenic failure 93</name>
        <acronym>SPGF93</acronym>
        <description>An autosomal recessive, male infertility disorder characterized by asthenozoospermia and multiple morphologic abnormalities of the sperm flagella.</description>
        <dbReference type="MIM" id="620849"/>
    </disease>
    <text>The disease is caused by variants affecting the gene represented in this entry.</text>
</comment>
<comment type="similarity">
    <text evidence="15">Belongs to the protein kinase superfamily. CAMK Ser/Thr protein kinase family. CaMK subfamily.</text>
</comment>
<comment type="caution">
    <text evidence="8 9">Was initially thought to be required for the survival of mutant KRAS-dependent cell lines (PubMed:19490892). However, it was later shown that it is not essential for the survival of KRAS-dependent AML cell lines (PubMed:21742770).</text>
</comment>
<dbReference type="EC" id="2.7.11.1" evidence="1"/>
<dbReference type="EMBL" id="AJ303380">
    <property type="protein sequence ID" value="CAC29064.1"/>
    <property type="molecule type" value="mRNA"/>
</dbReference>
<dbReference type="EMBL" id="AK093251">
    <property type="protein sequence ID" value="BAC04109.1"/>
    <property type="molecule type" value="mRNA"/>
</dbReference>
<dbReference type="EMBL" id="BC031231">
    <property type="protein sequence ID" value="AAH31231.1"/>
    <property type="molecule type" value="mRNA"/>
</dbReference>
<dbReference type="EMBL" id="AL833011">
    <property type="protein sequence ID" value="CAH56302.1"/>
    <property type="molecule type" value="mRNA"/>
</dbReference>
<dbReference type="CCDS" id="CCDS7789.1">
    <molecule id="Q9BYT3-1"/>
</dbReference>
<dbReference type="RefSeq" id="NP_001275987.1">
    <property type="nucleotide sequence ID" value="NM_001289058.1"/>
</dbReference>
<dbReference type="RefSeq" id="NP_001275988.1">
    <property type="nucleotide sequence ID" value="NM_001289059.1"/>
</dbReference>
<dbReference type="RefSeq" id="NP_001275990.1">
    <molecule id="Q9BYT3-1"/>
    <property type="nucleotide sequence ID" value="NM_001289061.2"/>
</dbReference>
<dbReference type="RefSeq" id="NP_001339316.1">
    <molecule id="Q9BYT3-1"/>
    <property type="nucleotide sequence ID" value="NM_001352387.2"/>
</dbReference>
<dbReference type="RefSeq" id="NP_001339317.1">
    <molecule id="Q9BYT3-1"/>
    <property type="nucleotide sequence ID" value="NM_001352388.2"/>
</dbReference>
<dbReference type="RefSeq" id="NP_001339318.1">
    <molecule id="Q9BYT3-1"/>
    <property type="nucleotide sequence ID" value="NM_001352389.2"/>
</dbReference>
<dbReference type="RefSeq" id="NP_001339319.1">
    <molecule id="Q9BYT3-1"/>
    <property type="nucleotide sequence ID" value="NM_001352390.2"/>
</dbReference>
<dbReference type="RefSeq" id="NP_001339320.1">
    <molecule id="Q9BYT3-1"/>
    <property type="nucleotide sequence ID" value="NM_001352391.2"/>
</dbReference>
<dbReference type="RefSeq" id="NP_001339321.1">
    <molecule id="Q9BYT3-1"/>
    <property type="nucleotide sequence ID" value="NM_001352392.2"/>
</dbReference>
<dbReference type="RefSeq" id="NP_001339322.1">
    <molecule id="Q9BYT3-1"/>
    <property type="nucleotide sequence ID" value="NM_001352393.2"/>
</dbReference>
<dbReference type="RefSeq" id="NP_001339328.1">
    <molecule id="Q9BYT3-2"/>
    <property type="nucleotide sequence ID" value="NM_001352399.2"/>
</dbReference>
<dbReference type="RefSeq" id="NP_112168.1">
    <molecule id="Q9BYT3-1"/>
    <property type="nucleotide sequence ID" value="NM_030906.4"/>
</dbReference>
<dbReference type="RefSeq" id="XP_011518590.1">
    <property type="nucleotide sequence ID" value="XM_011520288.2"/>
</dbReference>
<dbReference type="RefSeq" id="XP_011518592.1">
    <molecule id="Q9BYT3-1"/>
    <property type="nucleotide sequence ID" value="XM_011520290.3"/>
</dbReference>
<dbReference type="RefSeq" id="XP_011518594.1">
    <property type="nucleotide sequence ID" value="XM_011520292.2"/>
</dbReference>
<dbReference type="RefSeq" id="XP_011518595.1">
    <property type="nucleotide sequence ID" value="XM_011520293.2"/>
</dbReference>
<dbReference type="RefSeq" id="XP_011518596.1">
    <property type="nucleotide sequence ID" value="XM_011520294.1"/>
</dbReference>
<dbReference type="RefSeq" id="XP_011518597.1">
    <property type="nucleotide sequence ID" value="XM_011520295.2"/>
</dbReference>
<dbReference type="RefSeq" id="XP_016873632.1">
    <property type="nucleotide sequence ID" value="XM_017018143.1"/>
</dbReference>
<dbReference type="RefSeq" id="XP_016873633.1">
    <molecule id="Q9BYT3-1"/>
    <property type="nucleotide sequence ID" value="XM_017018144.3"/>
</dbReference>
<dbReference type="RefSeq" id="XP_016873634.1">
    <molecule id="Q9BYT3-1"/>
    <property type="nucleotide sequence ID" value="XM_017018145.2"/>
</dbReference>
<dbReference type="RefSeq" id="XP_016873635.1">
    <molecule id="Q9BYT3-1"/>
    <property type="nucleotide sequence ID" value="XM_017018146.2"/>
</dbReference>
<dbReference type="RefSeq" id="XP_016873636.1">
    <property type="nucleotide sequence ID" value="XM_017018147.1"/>
</dbReference>
<dbReference type="RefSeq" id="XP_016873637.1">
    <property type="nucleotide sequence ID" value="XM_017018148.1"/>
</dbReference>
<dbReference type="RefSeq" id="XP_016873638.1">
    <property type="nucleotide sequence ID" value="XM_017018149.1"/>
</dbReference>
<dbReference type="RefSeq" id="XP_016873639.1">
    <property type="nucleotide sequence ID" value="XM_017018150.1"/>
</dbReference>
<dbReference type="RefSeq" id="XP_016873640.1">
    <property type="nucleotide sequence ID" value="XM_017018151.1"/>
</dbReference>
<dbReference type="RefSeq" id="XP_016873641.1">
    <property type="nucleotide sequence ID" value="XM_017018152.1"/>
</dbReference>
<dbReference type="RefSeq" id="XP_016873642.1">
    <property type="nucleotide sequence ID" value="XM_017018153.1"/>
</dbReference>
<dbReference type="RefSeq" id="XP_016873643.1">
    <molecule id="Q9BYT3-1"/>
    <property type="nucleotide sequence ID" value="XM_017018154.2"/>
</dbReference>
<dbReference type="RefSeq" id="XP_016873644.1">
    <molecule id="Q9BYT3-1"/>
    <property type="nucleotide sequence ID" value="XM_017018155.3"/>
</dbReference>
<dbReference type="RefSeq" id="XP_016873645.1">
    <property type="nucleotide sequence ID" value="XM_017018156.1"/>
</dbReference>
<dbReference type="RefSeq" id="XP_016873648.1">
    <property type="nucleotide sequence ID" value="XM_017018159.1"/>
</dbReference>
<dbReference type="RefSeq" id="XP_016873649.1">
    <property type="nucleotide sequence ID" value="XM_017018160.1"/>
</dbReference>
<dbReference type="RefSeq" id="XP_047283403.1">
    <molecule id="Q9BYT3-1"/>
    <property type="nucleotide sequence ID" value="XM_047427447.1"/>
</dbReference>
<dbReference type="RefSeq" id="XP_047283404.1">
    <molecule id="Q9BYT3-1"/>
    <property type="nucleotide sequence ID" value="XM_047427448.1"/>
</dbReference>
<dbReference type="RefSeq" id="XP_047283405.1">
    <molecule id="Q9BYT3-1"/>
    <property type="nucleotide sequence ID" value="XM_047427449.1"/>
</dbReference>
<dbReference type="RefSeq" id="XP_047283406.1">
    <molecule id="Q9BYT3-1"/>
    <property type="nucleotide sequence ID" value="XM_047427450.1"/>
</dbReference>
<dbReference type="RefSeq" id="XP_047283407.1">
    <molecule id="Q9BYT3-1"/>
    <property type="nucleotide sequence ID" value="XM_047427451.1"/>
</dbReference>
<dbReference type="RefSeq" id="XP_047283408.1">
    <molecule id="Q9BYT3-1"/>
    <property type="nucleotide sequence ID" value="XM_047427452.1"/>
</dbReference>
<dbReference type="RefSeq" id="XP_047283409.1">
    <molecule id="Q9BYT3-1"/>
    <property type="nucleotide sequence ID" value="XM_047427453.1"/>
</dbReference>
<dbReference type="RefSeq" id="XP_047283410.1">
    <molecule id="Q9BYT3-1"/>
    <property type="nucleotide sequence ID" value="XM_047427454.1"/>
</dbReference>
<dbReference type="RefSeq" id="XP_047283411.1">
    <molecule id="Q9BYT3-1"/>
    <property type="nucleotide sequence ID" value="XM_047427455.1"/>
</dbReference>
<dbReference type="RefSeq" id="XP_047283412.1">
    <molecule id="Q9BYT3-1"/>
    <property type="nucleotide sequence ID" value="XM_047427456.1"/>
</dbReference>
<dbReference type="RefSeq" id="XP_047283413.1">
    <molecule id="Q9BYT3-1"/>
    <property type="nucleotide sequence ID" value="XM_047427457.1"/>
</dbReference>
<dbReference type="RefSeq" id="XP_047283414.1">
    <molecule id="Q9BYT3-1"/>
    <property type="nucleotide sequence ID" value="XM_047427458.1"/>
</dbReference>
<dbReference type="RefSeq" id="XP_047283415.1">
    <molecule id="Q9BYT3-1"/>
    <property type="nucleotide sequence ID" value="XM_047427459.1"/>
</dbReference>
<dbReference type="RefSeq" id="XP_047283416.1">
    <molecule id="Q9BYT3-1"/>
    <property type="nucleotide sequence ID" value="XM_047427460.1"/>
</dbReference>
<dbReference type="RefSeq" id="XP_047283417.1">
    <molecule id="Q9BYT3-1"/>
    <property type="nucleotide sequence ID" value="XM_047427461.1"/>
</dbReference>
<dbReference type="RefSeq" id="XP_047283418.1">
    <molecule id="Q9BYT3-1"/>
    <property type="nucleotide sequence ID" value="XM_047427462.1"/>
</dbReference>
<dbReference type="RefSeq" id="XP_047283426.1">
    <molecule id="Q9BYT3-2"/>
    <property type="nucleotide sequence ID" value="XM_047427470.1"/>
</dbReference>
<dbReference type="RefSeq" id="XP_047283427.1">
    <molecule id="Q9BYT3-2"/>
    <property type="nucleotide sequence ID" value="XM_047427471.1"/>
</dbReference>
<dbReference type="RefSeq" id="XP_047283428.1">
    <molecule id="Q9BYT3-2"/>
    <property type="nucleotide sequence ID" value="XM_047427472.1"/>
</dbReference>
<dbReference type="RefSeq" id="XP_047283429.1">
    <molecule id="Q9BYT3-2"/>
    <property type="nucleotide sequence ID" value="XM_047427473.1"/>
</dbReference>
<dbReference type="RefSeq" id="XP_047283430.1">
    <molecule id="Q9BYT3-2"/>
    <property type="nucleotide sequence ID" value="XM_047427474.1"/>
</dbReference>
<dbReference type="RefSeq" id="XP_047283431.1">
    <molecule id="Q9BYT3-2"/>
    <property type="nucleotide sequence ID" value="XM_047427475.1"/>
</dbReference>
<dbReference type="RefSeq" id="XP_054225658.1">
    <molecule id="Q9BYT3-1"/>
    <property type="nucleotide sequence ID" value="XM_054369683.1"/>
</dbReference>
<dbReference type="RefSeq" id="XP_054225659.1">
    <molecule id="Q9BYT3-1"/>
    <property type="nucleotide sequence ID" value="XM_054369684.1"/>
</dbReference>
<dbReference type="RefSeq" id="XP_054225660.1">
    <molecule id="Q9BYT3-1"/>
    <property type="nucleotide sequence ID" value="XM_054369685.1"/>
</dbReference>
<dbReference type="RefSeq" id="XP_054225661.1">
    <molecule id="Q9BYT3-1"/>
    <property type="nucleotide sequence ID" value="XM_054369686.1"/>
</dbReference>
<dbReference type="RefSeq" id="XP_054225662.1">
    <molecule id="Q9BYT3-1"/>
    <property type="nucleotide sequence ID" value="XM_054369687.1"/>
</dbReference>
<dbReference type="RefSeq" id="XP_054225663.1">
    <molecule id="Q9BYT3-1"/>
    <property type="nucleotide sequence ID" value="XM_054369688.1"/>
</dbReference>
<dbReference type="RefSeq" id="XP_054225664.1">
    <molecule id="Q9BYT3-1"/>
    <property type="nucleotide sequence ID" value="XM_054369689.1"/>
</dbReference>
<dbReference type="RefSeq" id="XP_054225665.1">
    <molecule id="Q9BYT3-1"/>
    <property type="nucleotide sequence ID" value="XM_054369690.1"/>
</dbReference>
<dbReference type="RefSeq" id="XP_054225666.1">
    <molecule id="Q9BYT3-1"/>
    <property type="nucleotide sequence ID" value="XM_054369691.1"/>
</dbReference>
<dbReference type="RefSeq" id="XP_054225667.1">
    <molecule id="Q9BYT3-1"/>
    <property type="nucleotide sequence ID" value="XM_054369692.1"/>
</dbReference>
<dbReference type="RefSeq" id="XP_054225668.1">
    <molecule id="Q9BYT3-1"/>
    <property type="nucleotide sequence ID" value="XM_054369693.1"/>
</dbReference>
<dbReference type="RefSeq" id="XP_054225669.1">
    <molecule id="Q9BYT3-1"/>
    <property type="nucleotide sequence ID" value="XM_054369694.1"/>
</dbReference>
<dbReference type="RefSeq" id="XP_054225670.1">
    <molecule id="Q9BYT3-1"/>
    <property type="nucleotide sequence ID" value="XM_054369695.1"/>
</dbReference>
<dbReference type="RefSeq" id="XP_054225671.1">
    <molecule id="Q9BYT3-1"/>
    <property type="nucleotide sequence ID" value="XM_054369696.1"/>
</dbReference>
<dbReference type="RefSeq" id="XP_054225672.1">
    <molecule id="Q9BYT3-1"/>
    <property type="nucleotide sequence ID" value="XM_054369697.1"/>
</dbReference>
<dbReference type="RefSeq" id="XP_054225673.1">
    <molecule id="Q9BYT3-1"/>
    <property type="nucleotide sequence ID" value="XM_054369698.1"/>
</dbReference>
<dbReference type="RefSeq" id="XP_054225674.1">
    <molecule id="Q9BYT3-1"/>
    <property type="nucleotide sequence ID" value="XM_054369699.1"/>
</dbReference>
<dbReference type="RefSeq" id="XP_054225675.1">
    <molecule id="Q9BYT3-1"/>
    <property type="nucleotide sequence ID" value="XM_054369700.1"/>
</dbReference>
<dbReference type="RefSeq" id="XP_054225676.1">
    <molecule id="Q9BYT3-1"/>
    <property type="nucleotide sequence ID" value="XM_054369701.1"/>
</dbReference>
<dbReference type="RefSeq" id="XP_054225677.1">
    <molecule id="Q9BYT3-1"/>
    <property type="nucleotide sequence ID" value="XM_054369702.1"/>
</dbReference>
<dbReference type="RefSeq" id="XP_054225678.1">
    <molecule id="Q9BYT3-1"/>
    <property type="nucleotide sequence ID" value="XM_054369703.1"/>
</dbReference>
<dbReference type="RefSeq" id="XP_054225679.1">
    <molecule id="Q9BYT3-1"/>
    <property type="nucleotide sequence ID" value="XM_054369704.1"/>
</dbReference>
<dbReference type="RefSeq" id="XP_054225680.1">
    <molecule id="Q9BYT3-1"/>
    <property type="nucleotide sequence ID" value="XM_054369705.1"/>
</dbReference>
<dbReference type="RefSeq" id="XP_054225690.1">
    <molecule id="Q9BYT3-2"/>
    <property type="nucleotide sequence ID" value="XM_054369715.1"/>
</dbReference>
<dbReference type="RefSeq" id="XP_054225691.1">
    <molecule id="Q9BYT3-2"/>
    <property type="nucleotide sequence ID" value="XM_054369716.1"/>
</dbReference>
<dbReference type="RefSeq" id="XP_054225692.1">
    <molecule id="Q9BYT3-2"/>
    <property type="nucleotide sequence ID" value="XM_054369717.1"/>
</dbReference>
<dbReference type="RefSeq" id="XP_054225693.1">
    <molecule id="Q9BYT3-2"/>
    <property type="nucleotide sequence ID" value="XM_054369718.1"/>
</dbReference>
<dbReference type="RefSeq" id="XP_054225694.1">
    <molecule id="Q9BYT3-2"/>
    <property type="nucleotide sequence ID" value="XM_054369719.1"/>
</dbReference>
<dbReference type="PDB" id="8VF6">
    <property type="method" value="X-ray"/>
    <property type="resolution" value="2.70 A"/>
    <property type="chains" value="A/B=99-383"/>
</dbReference>
<dbReference type="PDBsum" id="8VF6"/>
<dbReference type="SMR" id="Q9BYT3"/>
<dbReference type="BioGRID" id="122426">
    <property type="interactions" value="39"/>
</dbReference>
<dbReference type="FunCoup" id="Q9BYT3">
    <property type="interactions" value="1712"/>
</dbReference>
<dbReference type="IntAct" id="Q9BYT3">
    <property type="interactions" value="21"/>
</dbReference>
<dbReference type="STRING" id="9606.ENSP00000416750"/>
<dbReference type="BindingDB" id="Q9BYT3"/>
<dbReference type="ChEMBL" id="CHEMBL6005"/>
<dbReference type="DrugBank" id="DB12010">
    <property type="generic name" value="Fostamatinib"/>
</dbReference>
<dbReference type="DrugCentral" id="Q9BYT3"/>
<dbReference type="GuidetoPHARMACOLOGY" id="2221"/>
<dbReference type="GlyGen" id="Q9BYT3">
    <property type="glycosylation" value="1 site, 1 O-linked glycan (1 site)"/>
</dbReference>
<dbReference type="iPTMnet" id="Q9BYT3"/>
<dbReference type="PhosphoSitePlus" id="Q9BYT3"/>
<dbReference type="BioMuta" id="STK33"/>
<dbReference type="DMDM" id="74761329"/>
<dbReference type="CPTAC" id="non-CPTAC-2946"/>
<dbReference type="jPOST" id="Q9BYT3"/>
<dbReference type="MassIVE" id="Q9BYT3"/>
<dbReference type="PaxDb" id="9606-ENSP00000416750"/>
<dbReference type="PeptideAtlas" id="Q9BYT3"/>
<dbReference type="ProteomicsDB" id="79704">
    <molecule id="Q9BYT3-1"/>
</dbReference>
<dbReference type="ProteomicsDB" id="79705">
    <molecule id="Q9BYT3-2"/>
</dbReference>
<dbReference type="Pumba" id="Q9BYT3"/>
<dbReference type="Antibodypedia" id="11459">
    <property type="antibodies" value="446 antibodies from 35 providers"/>
</dbReference>
<dbReference type="DNASU" id="65975"/>
<dbReference type="Ensembl" id="ENST00000315204.5">
    <molecule id="Q9BYT3-1"/>
    <property type="protein sequence ID" value="ENSP00000320754.1"/>
    <property type="gene ID" value="ENSG00000130413.16"/>
</dbReference>
<dbReference type="Ensembl" id="ENST00000396672.5">
    <molecule id="Q9BYT3-1"/>
    <property type="protein sequence ID" value="ENSP00000379905.1"/>
    <property type="gene ID" value="ENSG00000130413.16"/>
</dbReference>
<dbReference type="Ensembl" id="ENST00000447869.5">
    <molecule id="Q9BYT3-1"/>
    <property type="protein sequence ID" value="ENSP00000416750.1"/>
    <property type="gene ID" value="ENSG00000130413.16"/>
</dbReference>
<dbReference type="Ensembl" id="ENST00000687296.1">
    <molecule id="Q9BYT3-1"/>
    <property type="protein sequence ID" value="ENSP00000509322.1"/>
    <property type="gene ID" value="ENSG00000130413.16"/>
</dbReference>
<dbReference type="GeneID" id="65975"/>
<dbReference type="KEGG" id="hsa:65975"/>
<dbReference type="MANE-Select" id="ENST00000687296.1">
    <property type="protein sequence ID" value="ENSP00000509322.1"/>
    <property type="RefSeq nucleotide sequence ID" value="NM_001352389.2"/>
    <property type="RefSeq protein sequence ID" value="NP_001339318.1"/>
</dbReference>
<dbReference type="UCSC" id="uc001mgi.3">
    <molecule id="Q9BYT3-1"/>
    <property type="organism name" value="human"/>
</dbReference>
<dbReference type="AGR" id="HGNC:14568"/>
<dbReference type="CTD" id="65975"/>
<dbReference type="DisGeNET" id="65975"/>
<dbReference type="GeneCards" id="STK33"/>
<dbReference type="HGNC" id="HGNC:14568">
    <property type="gene designation" value="STK33"/>
</dbReference>
<dbReference type="HPA" id="ENSG00000130413">
    <property type="expression patterns" value="Tissue enhanced (choroid plexus, testis)"/>
</dbReference>
<dbReference type="MalaCards" id="STK33"/>
<dbReference type="MIM" id="607670">
    <property type="type" value="gene"/>
</dbReference>
<dbReference type="MIM" id="620849">
    <property type="type" value="phenotype"/>
</dbReference>
<dbReference type="neXtProt" id="NX_Q9BYT3"/>
<dbReference type="OpenTargets" id="ENSG00000130413"/>
<dbReference type="PharmGKB" id="PA37900"/>
<dbReference type="VEuPathDB" id="HostDB:ENSG00000130413"/>
<dbReference type="eggNOG" id="KOG0032">
    <property type="taxonomic scope" value="Eukaryota"/>
</dbReference>
<dbReference type="GeneTree" id="ENSGT00940000159050"/>
<dbReference type="InParanoid" id="Q9BYT3"/>
<dbReference type="OMA" id="TQPIWAT"/>
<dbReference type="OrthoDB" id="541276at2759"/>
<dbReference type="PAN-GO" id="Q9BYT3">
    <property type="GO annotations" value="4 GO annotations based on evolutionary models"/>
</dbReference>
<dbReference type="PhylomeDB" id="Q9BYT3"/>
<dbReference type="TreeFam" id="TF314166"/>
<dbReference type="PathwayCommons" id="Q9BYT3"/>
<dbReference type="SignaLink" id="Q9BYT3"/>
<dbReference type="SIGNOR" id="Q9BYT3"/>
<dbReference type="BioGRID-ORCS" id="65975">
    <property type="hits" value="10 hits in 1180 CRISPR screens"/>
</dbReference>
<dbReference type="ChiTaRS" id="STK33">
    <property type="organism name" value="human"/>
</dbReference>
<dbReference type="GenomeRNAi" id="65975"/>
<dbReference type="Pharos" id="Q9BYT3">
    <property type="development level" value="Tchem"/>
</dbReference>
<dbReference type="PRO" id="PR:Q9BYT3"/>
<dbReference type="Proteomes" id="UP000005640">
    <property type="component" value="Chromosome 11"/>
</dbReference>
<dbReference type="RNAct" id="Q9BYT3">
    <property type="molecule type" value="protein"/>
</dbReference>
<dbReference type="Bgee" id="ENSG00000130413">
    <property type="expression patterns" value="Expressed in right uterine tube and 114 other cell types or tissues"/>
</dbReference>
<dbReference type="ExpressionAtlas" id="Q9BYT3">
    <property type="expression patterns" value="baseline and differential"/>
</dbReference>
<dbReference type="GO" id="GO:0002177">
    <property type="term" value="C:manchette"/>
    <property type="evidence" value="ECO:0000250"/>
    <property type="project" value="UniProtKB"/>
</dbReference>
<dbReference type="GO" id="GO:0005634">
    <property type="term" value="C:nucleus"/>
    <property type="evidence" value="ECO:0000318"/>
    <property type="project" value="GO_Central"/>
</dbReference>
<dbReference type="GO" id="GO:0048471">
    <property type="term" value="C:perinuclear region of cytoplasm"/>
    <property type="evidence" value="ECO:0007669"/>
    <property type="project" value="UniProtKB-SubCell"/>
</dbReference>
<dbReference type="GO" id="GO:0005524">
    <property type="term" value="F:ATP binding"/>
    <property type="evidence" value="ECO:0007669"/>
    <property type="project" value="UniProtKB-KW"/>
</dbReference>
<dbReference type="GO" id="GO:0106310">
    <property type="term" value="F:protein serine kinase activity"/>
    <property type="evidence" value="ECO:0007669"/>
    <property type="project" value="RHEA"/>
</dbReference>
<dbReference type="GO" id="GO:0004674">
    <property type="term" value="F:protein serine/threonine kinase activity"/>
    <property type="evidence" value="ECO:0000315"/>
    <property type="project" value="UniProtKB"/>
</dbReference>
<dbReference type="GO" id="GO:1905198">
    <property type="term" value="P:manchette assembly"/>
    <property type="evidence" value="ECO:0000250"/>
    <property type="project" value="UniProtKB"/>
</dbReference>
<dbReference type="GO" id="GO:0044773">
    <property type="term" value="P:mitotic DNA damage checkpoint signaling"/>
    <property type="evidence" value="ECO:0000318"/>
    <property type="project" value="GO_Central"/>
</dbReference>
<dbReference type="GO" id="GO:0046777">
    <property type="term" value="P:protein autophosphorylation"/>
    <property type="evidence" value="ECO:0000250"/>
    <property type="project" value="UniProtKB"/>
</dbReference>
<dbReference type="GO" id="GO:0007283">
    <property type="term" value="P:spermatogenesis"/>
    <property type="evidence" value="ECO:0000315"/>
    <property type="project" value="UniProtKB"/>
</dbReference>
<dbReference type="CDD" id="cd14097">
    <property type="entry name" value="STKc_STK33"/>
    <property type="match status" value="1"/>
</dbReference>
<dbReference type="FunFam" id="3.30.200.20:FF:000042">
    <property type="entry name" value="Aurora kinase A"/>
    <property type="match status" value="1"/>
</dbReference>
<dbReference type="FunFam" id="1.10.510.10:FF:000557">
    <property type="entry name" value="Serine/threonine-protein kinase 33"/>
    <property type="match status" value="1"/>
</dbReference>
<dbReference type="Gene3D" id="1.10.510.10">
    <property type="entry name" value="Transferase(Phosphotransferase) domain 1"/>
    <property type="match status" value="1"/>
</dbReference>
<dbReference type="InterPro" id="IPR011009">
    <property type="entry name" value="Kinase-like_dom_sf"/>
</dbReference>
<dbReference type="InterPro" id="IPR000719">
    <property type="entry name" value="Prot_kinase_dom"/>
</dbReference>
<dbReference type="InterPro" id="IPR017441">
    <property type="entry name" value="Protein_kinase_ATP_BS"/>
</dbReference>
<dbReference type="InterPro" id="IPR008271">
    <property type="entry name" value="Ser/Thr_kinase_AS"/>
</dbReference>
<dbReference type="PANTHER" id="PTHR24347">
    <property type="entry name" value="SERINE/THREONINE-PROTEIN KINASE"/>
    <property type="match status" value="1"/>
</dbReference>
<dbReference type="Pfam" id="PF00069">
    <property type="entry name" value="Pkinase"/>
    <property type="match status" value="1"/>
</dbReference>
<dbReference type="SMART" id="SM00220">
    <property type="entry name" value="S_TKc"/>
    <property type="match status" value="1"/>
</dbReference>
<dbReference type="SUPFAM" id="SSF56112">
    <property type="entry name" value="Protein kinase-like (PK-like)"/>
    <property type="match status" value="1"/>
</dbReference>
<dbReference type="PROSITE" id="PS00107">
    <property type="entry name" value="PROTEIN_KINASE_ATP"/>
    <property type="match status" value="1"/>
</dbReference>
<dbReference type="PROSITE" id="PS50011">
    <property type="entry name" value="PROTEIN_KINASE_DOM"/>
    <property type="match status" value="1"/>
</dbReference>
<dbReference type="PROSITE" id="PS00108">
    <property type="entry name" value="PROTEIN_KINASE_ST"/>
    <property type="match status" value="1"/>
</dbReference>